<gene>
    <name type="ordered locus">HI_1015</name>
</gene>
<protein>
    <recommendedName>
        <fullName>Uncharacterized permease HI_1015</fullName>
    </recommendedName>
</protein>
<proteinExistence type="inferred from homology"/>
<comment type="subcellular location">
    <subcellularLocation>
        <location evidence="2">Cell inner membrane</location>
        <topology evidence="2">Multi-pass membrane protein</topology>
    </subcellularLocation>
</comment>
<comment type="similarity">
    <text evidence="2">Belongs to the GntP permease family.</text>
</comment>
<organism>
    <name type="scientific">Haemophilus influenzae (strain ATCC 51907 / DSM 11121 / KW20 / Rd)</name>
    <dbReference type="NCBI Taxonomy" id="71421"/>
    <lineage>
        <taxon>Bacteria</taxon>
        <taxon>Pseudomonadati</taxon>
        <taxon>Pseudomonadota</taxon>
        <taxon>Gammaproteobacteria</taxon>
        <taxon>Pasteurellales</taxon>
        <taxon>Pasteurellaceae</taxon>
        <taxon>Haemophilus</taxon>
    </lineage>
</organism>
<dbReference type="EMBL" id="L42023">
    <property type="protein sequence ID" value="AAC22676.1"/>
    <property type="molecule type" value="Genomic_DNA"/>
</dbReference>
<dbReference type="PIR" id="D64108">
    <property type="entry name" value="D64108"/>
</dbReference>
<dbReference type="RefSeq" id="NP_439176.1">
    <property type="nucleotide sequence ID" value="NC_000907.1"/>
</dbReference>
<dbReference type="STRING" id="71421.HI_1015"/>
<dbReference type="EnsemblBacteria" id="AAC22676">
    <property type="protein sequence ID" value="AAC22676"/>
    <property type="gene ID" value="HI_1015"/>
</dbReference>
<dbReference type="KEGG" id="hin:HI_1015"/>
<dbReference type="PATRIC" id="fig|71421.8.peg.1059"/>
<dbReference type="eggNOG" id="COG2610">
    <property type="taxonomic scope" value="Bacteria"/>
</dbReference>
<dbReference type="HOGENOM" id="CLU_027949_0_2_6"/>
<dbReference type="OrthoDB" id="9787129at2"/>
<dbReference type="PhylomeDB" id="P71364"/>
<dbReference type="BioCyc" id="HINF71421:G1GJ1-1055-MONOMER"/>
<dbReference type="Proteomes" id="UP000000579">
    <property type="component" value="Chromosome"/>
</dbReference>
<dbReference type="GO" id="GO:0005886">
    <property type="term" value="C:plasma membrane"/>
    <property type="evidence" value="ECO:0000318"/>
    <property type="project" value="GO_Central"/>
</dbReference>
<dbReference type="GO" id="GO:0015128">
    <property type="term" value="F:gluconate transmembrane transporter activity"/>
    <property type="evidence" value="ECO:0007669"/>
    <property type="project" value="InterPro"/>
</dbReference>
<dbReference type="InterPro" id="IPR003474">
    <property type="entry name" value="Glcn_transporter"/>
</dbReference>
<dbReference type="NCBIfam" id="TIGR00791">
    <property type="entry name" value="gntP"/>
    <property type="match status" value="1"/>
</dbReference>
<dbReference type="PANTHER" id="PTHR30354">
    <property type="entry name" value="GNT FAMILY GLUCONATE TRANSPORTER"/>
    <property type="match status" value="1"/>
</dbReference>
<dbReference type="PANTHER" id="PTHR30354:SF11">
    <property type="entry name" value="PERMEASE"/>
    <property type="match status" value="1"/>
</dbReference>
<dbReference type="Pfam" id="PF02447">
    <property type="entry name" value="GntP_permease"/>
    <property type="match status" value="1"/>
</dbReference>
<dbReference type="PIRSF" id="PIRSF002746">
    <property type="entry name" value="Gluconate_transporter"/>
    <property type="match status" value="1"/>
</dbReference>
<reference key="1">
    <citation type="journal article" date="1995" name="Science">
        <title>Whole-genome random sequencing and assembly of Haemophilus influenzae Rd.</title>
        <authorList>
            <person name="Fleischmann R.D."/>
            <person name="Adams M.D."/>
            <person name="White O."/>
            <person name="Clayton R.A."/>
            <person name="Kirkness E.F."/>
            <person name="Kerlavage A.R."/>
            <person name="Bult C.J."/>
            <person name="Tomb J.-F."/>
            <person name="Dougherty B.A."/>
            <person name="Merrick J.M."/>
            <person name="McKenney K."/>
            <person name="Sutton G.G."/>
            <person name="FitzHugh W."/>
            <person name="Fields C.A."/>
            <person name="Gocayne J.D."/>
            <person name="Scott J.D."/>
            <person name="Shirley R."/>
            <person name="Liu L.-I."/>
            <person name="Glodek A."/>
            <person name="Kelley J.M."/>
            <person name="Weidman J.F."/>
            <person name="Phillips C.A."/>
            <person name="Spriggs T."/>
            <person name="Hedblom E."/>
            <person name="Cotton M.D."/>
            <person name="Utterback T.R."/>
            <person name="Hanna M.C."/>
            <person name="Nguyen D.T."/>
            <person name="Saudek D.M."/>
            <person name="Brandon R.C."/>
            <person name="Fine L.D."/>
            <person name="Fritchman J.L."/>
            <person name="Fuhrmann J.L."/>
            <person name="Geoghagen N.S.M."/>
            <person name="Gnehm C.L."/>
            <person name="McDonald L.A."/>
            <person name="Small K.V."/>
            <person name="Fraser C.M."/>
            <person name="Smith H.O."/>
            <person name="Venter J.C."/>
        </authorList>
    </citation>
    <scope>NUCLEOTIDE SEQUENCE [LARGE SCALE GENOMIC DNA]</scope>
    <source>
        <strain>ATCC 51907 / DSM 11121 / KW20 / Rd</strain>
    </source>
</reference>
<accession>P71364</accession>
<keyword id="KW-0997">Cell inner membrane</keyword>
<keyword id="KW-1003">Cell membrane</keyword>
<keyword id="KW-0472">Membrane</keyword>
<keyword id="KW-1185">Reference proteome</keyword>
<keyword id="KW-0812">Transmembrane</keyword>
<keyword id="KW-1133">Transmembrane helix</keyword>
<keyword id="KW-0813">Transport</keyword>
<evidence type="ECO:0000255" key="1"/>
<evidence type="ECO:0000305" key="2"/>
<feature type="chain" id="PRO_0000061945" description="Uncharacterized permease HI_1015">
    <location>
        <begin position="1"/>
        <end position="488"/>
    </location>
</feature>
<feature type="transmembrane region" description="Helical" evidence="1">
    <location>
        <begin position="2"/>
        <end position="22"/>
    </location>
</feature>
<feature type="transmembrane region" description="Helical" evidence="1">
    <location>
        <begin position="27"/>
        <end position="47"/>
    </location>
</feature>
<feature type="transmembrane region" description="Helical" evidence="1">
    <location>
        <begin position="59"/>
        <end position="79"/>
    </location>
</feature>
<feature type="transmembrane region" description="Helical" evidence="1">
    <location>
        <begin position="106"/>
        <end position="126"/>
    </location>
</feature>
<feature type="transmembrane region" description="Helical" evidence="1">
    <location>
        <begin position="176"/>
        <end position="196"/>
    </location>
</feature>
<feature type="transmembrane region" description="Helical" evidence="1">
    <location>
        <begin position="241"/>
        <end position="261"/>
    </location>
</feature>
<feature type="transmembrane region" description="Helical" evidence="1">
    <location>
        <begin position="275"/>
        <end position="295"/>
    </location>
</feature>
<feature type="transmembrane region" description="Helical" evidence="1">
    <location>
        <begin position="314"/>
        <end position="334"/>
    </location>
</feature>
<feature type="transmembrane region" description="Helical" evidence="1">
    <location>
        <begin position="347"/>
        <end position="367"/>
    </location>
</feature>
<feature type="transmembrane region" description="Helical" evidence="1">
    <location>
        <begin position="368"/>
        <end position="388"/>
    </location>
</feature>
<feature type="transmembrane region" description="Helical" evidence="1">
    <location>
        <begin position="438"/>
        <end position="458"/>
    </location>
</feature>
<feature type="transmembrane region" description="Helical" evidence="1">
    <location>
        <begin position="461"/>
        <end position="481"/>
    </location>
</feature>
<name>Y1015_HAEIN</name>
<sequence>MFGLPIPIIGLLIAVFVLVFLVLRTRVHAFIAMLIAASIAGLVGGMSADETLNSITKGFGGTLGSIGIVIGLGVMMGSVLEVSGAAEKMAYSFIKMLGQKKEEWALAITGYVVSIPIFVDSAFVILYPVAKALAKNGKRSLLTLGVALAGGLAVTHHTVPPTPGPLGVAGLFGVDIGAMLLTGMCMAFLPVVGIVLYAKWLDKKYPNFNQEVFTEEELKQKYDSYIESREKKELPSLGLSLLPIVLPIVLIFIKAVVHLFVKDVPEALTSIPYQIVSFLGHPVIVLALSVLISVYTLLPKADKNTTALHLEEGVKTAGIILLVTGAGGALGAVLRDSGAGKQLAEQIANLPISPILIPFIVSTLVRFIQGSGTVAMITAASISSPILAQIPGVNMLLAAQAATMGSLFFGYFNDSLFWVVNRMMGINDVKKQMVVWSVPTTIAWGIGGISVILANLIFGNDGSVFDLLFPVVVLASILFYIKLQNKNL</sequence>